<protein>
    <recommendedName>
        <fullName evidence="1">Lipoprotein signal peptidase</fullName>
        <ecNumber evidence="1">3.4.23.36</ecNumber>
    </recommendedName>
    <alternativeName>
        <fullName evidence="1">Prolipoprotein signal peptidase</fullName>
    </alternativeName>
    <alternativeName>
        <fullName evidence="1">Signal peptidase II</fullName>
        <shortName evidence="1">SPase II</shortName>
    </alternativeName>
</protein>
<reference key="1">
    <citation type="journal article" date="2007" name="Genome Biol.">
        <title>Comparison of Francisella tularensis genomes reveals evolutionary events associated with the emergence of human pathogenic strains.</title>
        <authorList>
            <person name="Rohmer L."/>
            <person name="Fong C."/>
            <person name="Abmayr S."/>
            <person name="Wasnick M."/>
            <person name="Larson Freeman T.J."/>
            <person name="Radey M."/>
            <person name="Guina T."/>
            <person name="Svensson K."/>
            <person name="Hayden H.S."/>
            <person name="Jacobs M."/>
            <person name="Gallagher L.A."/>
            <person name="Manoil C."/>
            <person name="Ernst R.K."/>
            <person name="Drees B."/>
            <person name="Buckley D."/>
            <person name="Haugen E."/>
            <person name="Bovee D."/>
            <person name="Zhou Y."/>
            <person name="Chang J."/>
            <person name="Levy R."/>
            <person name="Lim R."/>
            <person name="Gillett W."/>
            <person name="Guenthener D."/>
            <person name="Kang A."/>
            <person name="Shaffer S.A."/>
            <person name="Taylor G."/>
            <person name="Chen J."/>
            <person name="Gallis B."/>
            <person name="D'Argenio D.A."/>
            <person name="Forsman M."/>
            <person name="Olson M.V."/>
            <person name="Goodlett D.R."/>
            <person name="Kaul R."/>
            <person name="Miller S.I."/>
            <person name="Brittnacher M.J."/>
        </authorList>
    </citation>
    <scope>NUCLEOTIDE SEQUENCE [LARGE SCALE GENOMIC DNA]</scope>
    <source>
        <strain>U112</strain>
    </source>
</reference>
<sequence>MNLLRPKLKYFILAILIIAADLYTKYLANTYLEFAQSVKITSFFNLTLLYNHGAAFSLLSNDQTSWQMIMFSTISLIAAIVLIYLIIKQPITEKINLFSFALILGGALGNFYDRAFQGYVIDFLDFHIGNYHWPSFNIADSAITCGVVILIAASLFTKKKS</sequence>
<proteinExistence type="inferred from homology"/>
<gene>
    <name evidence="1" type="primary">lspA</name>
    <name type="ordered locus">FTN_0440</name>
</gene>
<evidence type="ECO:0000255" key="1">
    <source>
        <dbReference type="HAMAP-Rule" id="MF_00161"/>
    </source>
</evidence>
<dbReference type="EC" id="3.4.23.36" evidence="1"/>
<dbReference type="EMBL" id="CP000439">
    <property type="protein sequence ID" value="ABK89343.1"/>
    <property type="molecule type" value="Genomic_DNA"/>
</dbReference>
<dbReference type="RefSeq" id="WP_003033138.1">
    <property type="nucleotide sequence ID" value="NZ_CP009633.1"/>
</dbReference>
<dbReference type="SMR" id="A0Q528"/>
<dbReference type="GeneID" id="75264075"/>
<dbReference type="KEGG" id="ftn:FTN_0440"/>
<dbReference type="KEGG" id="ftx:AW25_1595"/>
<dbReference type="BioCyc" id="FTUL401614:G1G75-459-MONOMER"/>
<dbReference type="UniPathway" id="UPA00665"/>
<dbReference type="Proteomes" id="UP000000762">
    <property type="component" value="Chromosome"/>
</dbReference>
<dbReference type="GO" id="GO:0005886">
    <property type="term" value="C:plasma membrane"/>
    <property type="evidence" value="ECO:0007669"/>
    <property type="project" value="UniProtKB-SubCell"/>
</dbReference>
<dbReference type="GO" id="GO:0004190">
    <property type="term" value="F:aspartic-type endopeptidase activity"/>
    <property type="evidence" value="ECO:0007669"/>
    <property type="project" value="UniProtKB-UniRule"/>
</dbReference>
<dbReference type="GO" id="GO:0006508">
    <property type="term" value="P:proteolysis"/>
    <property type="evidence" value="ECO:0007669"/>
    <property type="project" value="UniProtKB-KW"/>
</dbReference>
<dbReference type="HAMAP" id="MF_00161">
    <property type="entry name" value="LspA"/>
    <property type="match status" value="1"/>
</dbReference>
<dbReference type="InterPro" id="IPR001872">
    <property type="entry name" value="Peptidase_A8"/>
</dbReference>
<dbReference type="NCBIfam" id="TIGR00077">
    <property type="entry name" value="lspA"/>
    <property type="match status" value="1"/>
</dbReference>
<dbReference type="PANTHER" id="PTHR33695">
    <property type="entry name" value="LIPOPROTEIN SIGNAL PEPTIDASE"/>
    <property type="match status" value="1"/>
</dbReference>
<dbReference type="PANTHER" id="PTHR33695:SF1">
    <property type="entry name" value="LIPOPROTEIN SIGNAL PEPTIDASE"/>
    <property type="match status" value="1"/>
</dbReference>
<dbReference type="Pfam" id="PF01252">
    <property type="entry name" value="Peptidase_A8"/>
    <property type="match status" value="1"/>
</dbReference>
<dbReference type="PRINTS" id="PR00781">
    <property type="entry name" value="LIPOSIGPTASE"/>
</dbReference>
<dbReference type="PROSITE" id="PS00855">
    <property type="entry name" value="SPASE_II"/>
    <property type="match status" value="1"/>
</dbReference>
<name>LSPA_FRATN</name>
<feature type="chain" id="PRO_0000289381" description="Lipoprotein signal peptidase">
    <location>
        <begin position="1"/>
        <end position="161"/>
    </location>
</feature>
<feature type="transmembrane region" description="Helical" evidence="1">
    <location>
        <begin position="8"/>
        <end position="28"/>
    </location>
</feature>
<feature type="transmembrane region" description="Helical" evidence="1">
    <location>
        <begin position="40"/>
        <end position="60"/>
    </location>
</feature>
<feature type="transmembrane region" description="Helical" evidence="1">
    <location>
        <begin position="67"/>
        <end position="87"/>
    </location>
</feature>
<feature type="transmembrane region" description="Helical" evidence="1">
    <location>
        <begin position="91"/>
        <end position="111"/>
    </location>
</feature>
<feature type="transmembrane region" description="Helical" evidence="1">
    <location>
        <begin position="136"/>
        <end position="156"/>
    </location>
</feature>
<feature type="active site" evidence="1">
    <location>
        <position position="122"/>
    </location>
</feature>
<feature type="active site" evidence="1">
    <location>
        <position position="140"/>
    </location>
</feature>
<keyword id="KW-0064">Aspartyl protease</keyword>
<keyword id="KW-0997">Cell inner membrane</keyword>
<keyword id="KW-1003">Cell membrane</keyword>
<keyword id="KW-0378">Hydrolase</keyword>
<keyword id="KW-0472">Membrane</keyword>
<keyword id="KW-0645">Protease</keyword>
<keyword id="KW-0812">Transmembrane</keyword>
<keyword id="KW-1133">Transmembrane helix</keyword>
<accession>A0Q528</accession>
<comment type="function">
    <text evidence="1">This protein specifically catalyzes the removal of signal peptides from prolipoproteins.</text>
</comment>
<comment type="catalytic activity">
    <reaction evidence="1">
        <text>Release of signal peptides from bacterial membrane prolipoproteins. Hydrolyzes -Xaa-Yaa-Zaa-|-(S,diacylglyceryl)Cys-, in which Xaa is hydrophobic (preferably Leu), and Yaa (Ala or Ser) and Zaa (Gly or Ala) have small, neutral side chains.</text>
        <dbReference type="EC" id="3.4.23.36"/>
    </reaction>
</comment>
<comment type="pathway">
    <text evidence="1">Protein modification; lipoprotein biosynthesis (signal peptide cleavage).</text>
</comment>
<comment type="subcellular location">
    <subcellularLocation>
        <location evidence="1">Cell inner membrane</location>
        <topology evidence="1">Multi-pass membrane protein</topology>
    </subcellularLocation>
</comment>
<comment type="similarity">
    <text evidence="1">Belongs to the peptidase A8 family.</text>
</comment>
<organism>
    <name type="scientific">Francisella tularensis subsp. novicida (strain U112)</name>
    <dbReference type="NCBI Taxonomy" id="401614"/>
    <lineage>
        <taxon>Bacteria</taxon>
        <taxon>Pseudomonadati</taxon>
        <taxon>Pseudomonadota</taxon>
        <taxon>Gammaproteobacteria</taxon>
        <taxon>Thiotrichales</taxon>
        <taxon>Francisellaceae</taxon>
        <taxon>Francisella</taxon>
    </lineage>
</organism>